<keyword id="KW-0997">Cell inner membrane</keyword>
<keyword id="KW-1003">Cell membrane</keyword>
<keyword id="KW-0201">Cytochrome c-type biogenesis</keyword>
<keyword id="KW-0349">Heme</keyword>
<keyword id="KW-0408">Iron</keyword>
<keyword id="KW-0472">Membrane</keyword>
<keyword id="KW-0479">Metal-binding</keyword>
<keyword id="KW-0735">Signal-anchor</keyword>
<keyword id="KW-0812">Transmembrane</keyword>
<keyword id="KW-1133">Transmembrane helix</keyword>
<name>CCME_RICRO</name>
<gene>
    <name evidence="1" type="primary">ccmE</name>
    <name evidence="1" type="synonym">cycJ</name>
    <name type="ordered locus">RrIowa_1066</name>
</gene>
<comment type="function">
    <text evidence="1">Heme chaperone required for the biogenesis of c-type cytochromes. Transiently binds heme delivered by CcmC and transfers the heme to apo-cytochromes in a process facilitated by CcmF and CcmH.</text>
</comment>
<comment type="subcellular location">
    <subcellularLocation>
        <location evidence="1">Cell inner membrane</location>
        <topology evidence="1">Single-pass type II membrane protein</topology>
        <orientation evidence="1">Periplasmic side</orientation>
    </subcellularLocation>
</comment>
<comment type="similarity">
    <text evidence="1">Belongs to the CcmE/CycJ family.</text>
</comment>
<accession>B0BYD8</accession>
<organism>
    <name type="scientific">Rickettsia rickettsii (strain Iowa)</name>
    <dbReference type="NCBI Taxonomy" id="452659"/>
    <lineage>
        <taxon>Bacteria</taxon>
        <taxon>Pseudomonadati</taxon>
        <taxon>Pseudomonadota</taxon>
        <taxon>Alphaproteobacteria</taxon>
        <taxon>Rickettsiales</taxon>
        <taxon>Rickettsiaceae</taxon>
        <taxon>Rickettsieae</taxon>
        <taxon>Rickettsia</taxon>
        <taxon>spotted fever group</taxon>
    </lineage>
</organism>
<protein>
    <recommendedName>
        <fullName evidence="1">Cytochrome c-type biogenesis protein CcmE</fullName>
    </recommendedName>
    <alternativeName>
        <fullName evidence="1">Cytochrome c maturation protein E</fullName>
    </alternativeName>
    <alternativeName>
        <fullName evidence="1">Heme chaperone CcmE</fullName>
    </alternativeName>
</protein>
<evidence type="ECO:0000255" key="1">
    <source>
        <dbReference type="HAMAP-Rule" id="MF_01959"/>
    </source>
</evidence>
<dbReference type="EMBL" id="CP000766">
    <property type="protein sequence ID" value="ABY72864.1"/>
    <property type="molecule type" value="Genomic_DNA"/>
</dbReference>
<dbReference type="RefSeq" id="WP_012151059.1">
    <property type="nucleotide sequence ID" value="NC_010263.3"/>
</dbReference>
<dbReference type="SMR" id="B0BYD8"/>
<dbReference type="GeneID" id="79937579"/>
<dbReference type="KEGG" id="rrj:RrIowa_1066"/>
<dbReference type="eggNOG" id="COG2332">
    <property type="taxonomic scope" value="Bacteria"/>
</dbReference>
<dbReference type="HOGENOM" id="CLU_079503_1_1_5"/>
<dbReference type="Proteomes" id="UP000000796">
    <property type="component" value="Chromosome"/>
</dbReference>
<dbReference type="GO" id="GO:0005886">
    <property type="term" value="C:plasma membrane"/>
    <property type="evidence" value="ECO:0007669"/>
    <property type="project" value="UniProtKB-SubCell"/>
</dbReference>
<dbReference type="GO" id="GO:0020037">
    <property type="term" value="F:heme binding"/>
    <property type="evidence" value="ECO:0007669"/>
    <property type="project" value="InterPro"/>
</dbReference>
<dbReference type="GO" id="GO:0046872">
    <property type="term" value="F:metal ion binding"/>
    <property type="evidence" value="ECO:0007669"/>
    <property type="project" value="UniProtKB-KW"/>
</dbReference>
<dbReference type="GO" id="GO:0017004">
    <property type="term" value="P:cytochrome complex assembly"/>
    <property type="evidence" value="ECO:0007669"/>
    <property type="project" value="UniProtKB-KW"/>
</dbReference>
<dbReference type="Gene3D" id="2.40.50.140">
    <property type="entry name" value="Nucleic acid-binding proteins"/>
    <property type="match status" value="1"/>
</dbReference>
<dbReference type="HAMAP" id="MF_01959">
    <property type="entry name" value="CcmE"/>
    <property type="match status" value="1"/>
</dbReference>
<dbReference type="InterPro" id="IPR004329">
    <property type="entry name" value="CcmE"/>
</dbReference>
<dbReference type="InterPro" id="IPR036127">
    <property type="entry name" value="CcmE-like_sf"/>
</dbReference>
<dbReference type="InterPro" id="IPR012340">
    <property type="entry name" value="NA-bd_OB-fold"/>
</dbReference>
<dbReference type="NCBIfam" id="NF009727">
    <property type="entry name" value="PRK13254.1-1"/>
    <property type="match status" value="1"/>
</dbReference>
<dbReference type="PANTHER" id="PTHR34128">
    <property type="entry name" value="CYTOCHROME C-TYPE BIOGENESIS PROTEIN CCME HOMOLOG, MITOCHONDRIAL"/>
    <property type="match status" value="1"/>
</dbReference>
<dbReference type="PANTHER" id="PTHR34128:SF2">
    <property type="entry name" value="CYTOCHROME C-TYPE BIOGENESIS PROTEIN CCME HOMOLOG, MITOCHONDRIAL"/>
    <property type="match status" value="1"/>
</dbReference>
<dbReference type="Pfam" id="PF03100">
    <property type="entry name" value="CcmE"/>
    <property type="match status" value="1"/>
</dbReference>
<dbReference type="SUPFAM" id="SSF82093">
    <property type="entry name" value="Heme chaperone CcmE"/>
    <property type="match status" value="1"/>
</dbReference>
<feature type="chain" id="PRO_1000088530" description="Cytochrome c-type biogenesis protein CcmE">
    <location>
        <begin position="1"/>
        <end position="128"/>
    </location>
</feature>
<feature type="topological domain" description="Cytoplasmic" evidence="1">
    <location>
        <begin position="1"/>
        <end position="8"/>
    </location>
</feature>
<feature type="transmembrane region" description="Helical; Signal-anchor for type II membrane protein" evidence="1">
    <location>
        <begin position="9"/>
        <end position="29"/>
    </location>
</feature>
<feature type="topological domain" description="Periplasmic" evidence="1">
    <location>
        <begin position="30"/>
        <end position="128"/>
    </location>
</feature>
<feature type="binding site" description="covalent" evidence="1">
    <location>
        <position position="120"/>
    </location>
    <ligand>
        <name>heme</name>
        <dbReference type="ChEBI" id="CHEBI:30413"/>
    </ligand>
</feature>
<feature type="binding site" description="axial binding residue" evidence="1">
    <location>
        <position position="124"/>
    </location>
    <ligand>
        <name>heme</name>
        <dbReference type="ChEBI" id="CHEBI:30413"/>
    </ligand>
    <ligandPart>
        <name>Fe</name>
        <dbReference type="ChEBI" id="CHEBI:18248"/>
    </ligandPart>
</feature>
<sequence>MQKRVRNRLITIIICFCSAFLGISIILYNLEKNIVFFLPPSKINEIEQGKELRVGGLVKTDSINKIADDKISFVITDNIKDCEILYQGALPALFRKGQGIIAIGQLSNGKFIARQLLAKHDENYRPPQ</sequence>
<reference key="1">
    <citation type="journal article" date="2008" name="Infect. Immun.">
        <title>Genomic comparison of virulent Rickettsia rickettsii Sheila Smith and avirulent Rickettsia rickettsii Iowa.</title>
        <authorList>
            <person name="Ellison D.W."/>
            <person name="Clark T.R."/>
            <person name="Sturdevant D.E."/>
            <person name="Virtaneva K."/>
            <person name="Porcella S.F."/>
            <person name="Hackstadt T."/>
        </authorList>
    </citation>
    <scope>NUCLEOTIDE SEQUENCE [LARGE SCALE GENOMIC DNA]</scope>
    <source>
        <strain>Iowa</strain>
    </source>
</reference>
<proteinExistence type="inferred from homology"/>